<keyword id="KW-0072">Autophagy</keyword>
<keyword id="KW-0967">Endosome</keyword>
<keyword id="KW-0472">Membrane</keyword>
<keyword id="KW-0653">Protein transport</keyword>
<keyword id="KW-1185">Reference proteome</keyword>
<keyword id="KW-0813">Transport</keyword>
<keyword id="KW-0926">Vacuole</keyword>
<gene>
    <name type="primary">MON1</name>
    <name type="ordered locus">CAALFM_CR03960CA</name>
    <name type="ORF">CaO19.8109</name>
</gene>
<reference key="1">
    <citation type="journal article" date="2004" name="Proc. Natl. Acad. Sci. U.S.A.">
        <title>The diploid genome sequence of Candida albicans.</title>
        <authorList>
            <person name="Jones T."/>
            <person name="Federspiel N.A."/>
            <person name="Chibana H."/>
            <person name="Dungan J."/>
            <person name="Kalman S."/>
            <person name="Magee B.B."/>
            <person name="Newport G."/>
            <person name="Thorstenson Y.R."/>
            <person name="Agabian N."/>
            <person name="Magee P.T."/>
            <person name="Davis R.W."/>
            <person name="Scherer S."/>
        </authorList>
    </citation>
    <scope>NUCLEOTIDE SEQUENCE [LARGE SCALE GENOMIC DNA]</scope>
    <source>
        <strain>SC5314 / ATCC MYA-2876</strain>
    </source>
</reference>
<reference key="2">
    <citation type="journal article" date="2007" name="Genome Biol.">
        <title>Assembly of the Candida albicans genome into sixteen supercontigs aligned on the eight chromosomes.</title>
        <authorList>
            <person name="van het Hoog M."/>
            <person name="Rast T.J."/>
            <person name="Martchenko M."/>
            <person name="Grindle S."/>
            <person name="Dignard D."/>
            <person name="Hogues H."/>
            <person name="Cuomo C."/>
            <person name="Berriman M."/>
            <person name="Scherer S."/>
            <person name="Magee B.B."/>
            <person name="Whiteway M."/>
            <person name="Chibana H."/>
            <person name="Nantel A."/>
            <person name="Magee P.T."/>
        </authorList>
    </citation>
    <scope>GENOME REANNOTATION</scope>
    <source>
        <strain>SC5314 / ATCC MYA-2876</strain>
    </source>
</reference>
<reference key="3">
    <citation type="journal article" date="2013" name="Genome Biol.">
        <title>Assembly of a phased diploid Candida albicans genome facilitates allele-specific measurements and provides a simple model for repeat and indel structure.</title>
        <authorList>
            <person name="Muzzey D."/>
            <person name="Schwartz K."/>
            <person name="Weissman J.S."/>
            <person name="Sherlock G."/>
        </authorList>
    </citation>
    <scope>NUCLEOTIDE SEQUENCE [LARGE SCALE GENOMIC DNA]</scope>
    <scope>GENOME REANNOTATION</scope>
    <source>
        <strain>SC5314 / ATCC MYA-2876</strain>
    </source>
</reference>
<evidence type="ECO:0000250" key="1"/>
<evidence type="ECO:0000250" key="2">
    <source>
        <dbReference type="UniProtKB" id="P53129"/>
    </source>
</evidence>
<evidence type="ECO:0000256" key="3">
    <source>
        <dbReference type="SAM" id="MobiDB-lite"/>
    </source>
</evidence>
<evidence type="ECO:0000305" key="4"/>
<name>MON1_CANAL</name>
<accession>Q5A723</accession>
<accession>A0A1D8PSL7</accession>
<organism>
    <name type="scientific">Candida albicans (strain SC5314 / ATCC MYA-2876)</name>
    <name type="common">Yeast</name>
    <dbReference type="NCBI Taxonomy" id="237561"/>
    <lineage>
        <taxon>Eukaryota</taxon>
        <taxon>Fungi</taxon>
        <taxon>Dikarya</taxon>
        <taxon>Ascomycota</taxon>
        <taxon>Saccharomycotina</taxon>
        <taxon>Pichiomycetes</taxon>
        <taxon>Debaryomycetaceae</taxon>
        <taxon>Candida/Lodderomyces clade</taxon>
        <taxon>Candida</taxon>
    </lineage>
</organism>
<feature type="chain" id="PRO_0000278856" description="Vacuolar fusion protein MON1">
    <location>
        <begin position="1"/>
        <end position="565"/>
    </location>
</feature>
<feature type="region of interest" description="Disordered" evidence="3">
    <location>
        <begin position="1"/>
        <end position="37"/>
    </location>
</feature>
<feature type="compositionally biased region" description="Polar residues" evidence="3">
    <location>
        <begin position="16"/>
        <end position="37"/>
    </location>
</feature>
<proteinExistence type="inferred from homology"/>
<dbReference type="EMBL" id="CP017630">
    <property type="protein sequence ID" value="AOW31134.1"/>
    <property type="molecule type" value="Genomic_DNA"/>
</dbReference>
<dbReference type="RefSeq" id="XP_717342.2">
    <property type="nucleotide sequence ID" value="XM_712249.2"/>
</dbReference>
<dbReference type="SMR" id="Q5A723"/>
<dbReference type="FunCoup" id="Q5A723">
    <property type="interactions" value="569"/>
</dbReference>
<dbReference type="STRING" id="237561.Q5A723"/>
<dbReference type="EnsemblFungi" id="CR_03960C_A-T">
    <property type="protein sequence ID" value="CR_03960C_A-T-p1"/>
    <property type="gene ID" value="CR_03960C_A"/>
</dbReference>
<dbReference type="GeneID" id="3640963"/>
<dbReference type="KEGG" id="cal:CAALFM_CR03960CA"/>
<dbReference type="CGD" id="CAL0000177089">
    <property type="gene designation" value="orf19.8109"/>
</dbReference>
<dbReference type="VEuPathDB" id="FungiDB:CR_03960C_A"/>
<dbReference type="eggNOG" id="KOG0997">
    <property type="taxonomic scope" value="Eukaryota"/>
</dbReference>
<dbReference type="HOGENOM" id="CLU_025637_0_0_1"/>
<dbReference type="InParanoid" id="Q5A723"/>
<dbReference type="OMA" id="QQPFNAK"/>
<dbReference type="OrthoDB" id="272411at2759"/>
<dbReference type="Proteomes" id="UP000000559">
    <property type="component" value="Chromosome R"/>
</dbReference>
<dbReference type="GO" id="GO:0000329">
    <property type="term" value="C:fungal-type vacuole membrane"/>
    <property type="evidence" value="ECO:0000318"/>
    <property type="project" value="GO_Central"/>
</dbReference>
<dbReference type="GO" id="GO:0035658">
    <property type="term" value="C:Mon1-Ccz1 complex"/>
    <property type="evidence" value="ECO:0000318"/>
    <property type="project" value="GO_Central"/>
</dbReference>
<dbReference type="GO" id="GO:0032585">
    <property type="term" value="C:multivesicular body membrane"/>
    <property type="evidence" value="ECO:0007669"/>
    <property type="project" value="UniProtKB-SubCell"/>
</dbReference>
<dbReference type="GO" id="GO:0006914">
    <property type="term" value="P:autophagy"/>
    <property type="evidence" value="ECO:0007669"/>
    <property type="project" value="UniProtKB-KW"/>
</dbReference>
<dbReference type="GO" id="GO:0006623">
    <property type="term" value="P:protein targeting to vacuole"/>
    <property type="evidence" value="ECO:0000318"/>
    <property type="project" value="GO_Central"/>
</dbReference>
<dbReference type="GO" id="GO:0016192">
    <property type="term" value="P:vesicle-mediated transport"/>
    <property type="evidence" value="ECO:0007669"/>
    <property type="project" value="InterPro"/>
</dbReference>
<dbReference type="InterPro" id="IPR043972">
    <property type="entry name" value="FUZ/MON1/HPS1_longin_1"/>
</dbReference>
<dbReference type="InterPro" id="IPR043971">
    <property type="entry name" value="FUZ/MON1/HPS1_longin_2"/>
</dbReference>
<dbReference type="InterPro" id="IPR043970">
    <property type="entry name" value="FUZ/MON1/HPS1_longin_3"/>
</dbReference>
<dbReference type="InterPro" id="IPR004353">
    <property type="entry name" value="Mon1"/>
</dbReference>
<dbReference type="PANTHER" id="PTHR13027">
    <property type="entry name" value="SAND PROTEIN-RELATED"/>
    <property type="match status" value="1"/>
</dbReference>
<dbReference type="PANTHER" id="PTHR13027:SF7">
    <property type="entry name" value="VACUOLAR FUSION PROTEIN MON1 HOMOLOG"/>
    <property type="match status" value="1"/>
</dbReference>
<dbReference type="Pfam" id="PF19036">
    <property type="entry name" value="Fuz_longin_1"/>
    <property type="match status" value="1"/>
</dbReference>
<dbReference type="Pfam" id="PF19037">
    <property type="entry name" value="Fuz_longin_2"/>
    <property type="match status" value="1"/>
</dbReference>
<dbReference type="Pfam" id="PF19038">
    <property type="entry name" value="Fuz_longin_3"/>
    <property type="match status" value="1"/>
</dbReference>
<dbReference type="PRINTS" id="PR01546">
    <property type="entry name" value="YEAST73DUF"/>
</dbReference>
<comment type="function">
    <text evidence="2">In complex with CCZ1, is required for multiple vacuole delivery pathways including the cytoplasm to vacuole transport (Cvt), autophagy, pexophagy and endocytosis. The MON1-CCZ1 complex acts at the fusion of vesicles with the vacuole, through its regulation of the SNARE complex during the coordinated priming and docking stages of fusion, and particularly at the stage of tethering/docking.</text>
</comment>
<comment type="subcellular location">
    <subcellularLocation>
        <location evidence="1">Endosome</location>
        <location evidence="1">Multivesicular body membrane</location>
        <topology evidence="1">Peripheral membrane protein</topology>
    </subcellularLocation>
    <subcellularLocation>
        <location evidence="1">Prevacuolar compartment membrane</location>
        <topology evidence="1">Peripheral membrane protein</topology>
    </subcellularLocation>
    <subcellularLocation>
        <location evidence="1">Vacuole membrane</location>
        <topology evidence="1">Peripheral membrane protein</topology>
    </subcellularLocation>
</comment>
<comment type="similarity">
    <text evidence="4">Belongs to the MON1/SAND family.</text>
</comment>
<protein>
    <recommendedName>
        <fullName>Vacuolar fusion protein MON1</fullName>
    </recommendedName>
</protein>
<sequence>MSFPKTLNVPDKSSLLVPQTTKASATGPTTAVSYETASSEIRSIRESPYLPSSPVDSQQFDGRSIISTSGMSEYIADLNDLPSIRHDINPTSIKTGGTGSRSFKFSNCFQTLDSELSNMDFFTKYISISKGDDKAQFNNKLKHFFIFSSAGKPIYSMNGSDDIVIGYMGILTTIVSSFQENFNQELQVLELGQGLKIVAVNKSPIILISISKLSFETVESVHLQLDTLYCYLIGILSKSVIDKHFNNRLNYDLRRILSPLDFENLDELCLNLTYGIPNTSDRTQDSTFGLYTSQVLLPLSRESVKIRHTLRSKLNSIVNTNNEDVLFTILLSGNGKILNYLHPKQHNLPNKDLNMLLFIIHSLLKNQSQQDEDLWLPLCMPTFNDHGFLYVFVRQWQDLVLMLISGSKNSFDALKLSANEICTKLNNKQELAVKLINELSIPLSIEVPFVFKHFIYKDIRLNQFVMSELPTHEFSSFQFLKCYNELKVSQAKIIKHDNNLNYKKLTYLQDRDITGFMLMDKYYEFYCIIERSSEQETITSKKLIQISSQIIRWCKKNHARLFVTI</sequence>